<reference key="1">
    <citation type="journal article" date="2010" name="Microbiology">
        <title>Mat fimbriae promote biofilm formation by meningitis-associated Escherichia coli.</title>
        <authorList>
            <person name="Lehti T.A."/>
            <person name="Bauchart P."/>
            <person name="Heikkinen J."/>
            <person name="Hacker J."/>
            <person name="Korhonen T.K."/>
            <person name="Dobrindt U."/>
            <person name="Westerlund-Wikstrom B."/>
        </authorList>
    </citation>
    <scope>NUCLEOTIDE SEQUENCE [GENOMIC DNA]</scope>
    <scope>FUNCTION</scope>
    <scope>DISRUPTION PHENOTYPE</scope>
    <source>
        <strain>IHE3034 / ExPEC</strain>
    </source>
</reference>
<reference key="2">
    <citation type="journal article" date="2010" name="Proc. Natl. Acad. Sci. U.S.A.">
        <title>Identification of protective and broadly conserved vaccine antigens from the genome of extraintestinal pathogenic Escherichia coli.</title>
        <authorList>
            <person name="Moriel D.G."/>
            <person name="Bertoldi I."/>
            <person name="Spagnuolo A."/>
            <person name="Marchi S."/>
            <person name="Rosini R."/>
            <person name="Nesta B."/>
            <person name="Pastorello I."/>
            <person name="Corea V.A."/>
            <person name="Torricelli G."/>
            <person name="Cartocci E."/>
            <person name="Savino S."/>
            <person name="Scarselli M."/>
            <person name="Dobrindt U."/>
            <person name="Hacker J."/>
            <person name="Tettelin H."/>
            <person name="Tallon L.J."/>
            <person name="Sullivan S."/>
            <person name="Wieler L.H."/>
            <person name="Ewers C."/>
            <person name="Pickard D."/>
            <person name="Dougan G."/>
            <person name="Fontana M.R."/>
            <person name="Rappuoli R."/>
            <person name="Pizza M."/>
            <person name="Serino L."/>
        </authorList>
    </citation>
    <scope>NUCLEOTIDE SEQUENCE [LARGE SCALE GENOMIC DNA]</scope>
    <source>
        <strain>IHE3034 / ExPEC</strain>
    </source>
</reference>
<evidence type="ECO:0000250" key="1"/>
<evidence type="ECO:0000255" key="2"/>
<evidence type="ECO:0000269" key="3">
    <source>
    </source>
</evidence>
<evidence type="ECO:0000305" key="4"/>
<name>ECPC_ECOKI</name>
<organism>
    <name type="scientific">Escherichia coli O18:K1:H7 (strain IHE3034 / ExPEC)</name>
    <dbReference type="NCBI Taxonomy" id="714962"/>
    <lineage>
        <taxon>Bacteria</taxon>
        <taxon>Pseudomonadati</taxon>
        <taxon>Pseudomonadota</taxon>
        <taxon>Gammaproteobacteria</taxon>
        <taxon>Enterobacterales</taxon>
        <taxon>Enterobacteriaceae</taxon>
        <taxon>Escherichia</taxon>
    </lineage>
</organism>
<proteinExistence type="inferred from homology"/>
<dbReference type="EMBL" id="HM102365">
    <property type="protein sequence ID" value="ADI59490.1"/>
    <property type="molecule type" value="Genomic_DNA"/>
</dbReference>
<dbReference type="EMBL" id="CP001969">
    <property type="protein sequence ID" value="ADE88558.1"/>
    <property type="molecule type" value="Genomic_DNA"/>
</dbReference>
<dbReference type="RefSeq" id="WP_001131109.1">
    <property type="nucleotide sequence ID" value="NC_017628.1"/>
</dbReference>
<dbReference type="KEGG" id="eih:ECOK1_0278"/>
<dbReference type="PATRIC" id="fig|714962.3.peg.278"/>
<dbReference type="HOGENOM" id="CLU_017537_0_0_6"/>
<dbReference type="InterPro" id="IPR008969">
    <property type="entry name" value="CarboxyPept-like_regulatory"/>
</dbReference>
<dbReference type="InterPro" id="IPR031917">
    <property type="entry name" value="Pilus_assem_C"/>
</dbReference>
<dbReference type="InterPro" id="IPR032636">
    <property type="entry name" value="Pilus_assem_E-set-like_dom"/>
</dbReference>
<dbReference type="Pfam" id="PF15976">
    <property type="entry name" value="CooC_C"/>
    <property type="match status" value="1"/>
</dbReference>
<dbReference type="Pfam" id="PF16967">
    <property type="entry name" value="TcfC"/>
    <property type="match status" value="1"/>
</dbReference>
<dbReference type="SUPFAM" id="SSF49464">
    <property type="entry name" value="Carboxypeptidase regulatory domain-like"/>
    <property type="match status" value="1"/>
</dbReference>
<sequence length="841" mass="91323">MPLRRFSPGLKAQFAFGMVFLFVQPDASAADISAQQIGGVIIPQAFSQALQDGMSVPLYIHLAGSQGRQDDQRIGSAFIWLDDGQLRIRKIQLEESEDNASVSEQTRQQLMTLANAPFNEALTIPLTDNAQLDLSLRQLLLQLVVKREALGTVLRSRSEDIGQSSVNTLSSNLSYNFGVYNNQLRNGGSNTSSYLSLNNVTALREHHVVLDGSLYGIGSGQQDSELYKAMYERDFAGHRFAGGMLDTWNLQSLGPMTAISAGKIYGLSWGNQASSTIFDSSQSATPVIAFLPAAGEVHLTRDGRLLSVQNFTMGNHEVDTRGLPYGIYDVEVEVIVNGRVISKRTQRVNKLFSRGRGVGAPLAWQIWGGSFHMDRWSENGKKTRPAKESWLAGASTSGSLSTFSWAATGYGYDNQAVGETRLTLPLGGAINVNLQNMLASDSSWSNIASISATLPGGFSSLWVNQEKTRIGNQLRRSDADNRAIGGTLNLNSLWSKLGTFSISYNDDRRYNSHYYTADYYQSVYSGTFGSLGLRAGIQRYNNGDSSANTGKYIALDLSLPLGNWFSAGMTHQNGYTMANLSARKQFDEGTIRTVGANLSRAISGDTGDDKTLSGGAYAQFDARYASGTLNVNSAADGYINTNLTANGSVGWQGKNIAASGRTDGNAGVIFDTGLENDGQISAKINGRIFPLNGKRNYLPLSPYGRYEVELQNSKNSLDSYDIVSGRKSHLTLYPGNVAVIEPEVKQMVTVSGRIRAEDGTLLANARINNHIGRTRTDENGEFVMDVDKKYPTIDFRYSGNKTCEVALELNQARGAVWVGDVVCSGLSSWAAVTQTGEENES</sequence>
<feature type="signal peptide" evidence="2">
    <location>
        <begin position="1"/>
        <end position="29"/>
    </location>
</feature>
<feature type="chain" id="PRO_0000429532" description="Probable outer membrane usher protein EcpC">
    <location>
        <begin position="30"/>
        <end position="841"/>
    </location>
</feature>
<comment type="function">
    <text evidence="3">Part of the ecpRABCDE operon, which encodes the E.coli common pilus (ECP). ECP is found in both commensal and pathogenic strains and plays a dual role in early-stage biofilm development and host cell recognition.</text>
</comment>
<comment type="induction">
    <text evidence="1">Negatively regulated by H-NS. Positively regulated by IHF and EcpR (By similarity).</text>
</comment>
<comment type="disruption phenotype">
    <text evidence="3">Mutants do not express ECP and are defective in biofilm formation.</text>
</comment>
<comment type="similarity">
    <text evidence="4">Belongs to the EcpC/MatD family.</text>
</comment>
<keyword id="KW-1029">Fimbrium biogenesis</keyword>
<keyword id="KW-0732">Signal</keyword>
<keyword id="KW-0813">Transport</keyword>
<gene>
    <name type="primary">ecpC</name>
    <name type="synonym">matD</name>
    <name type="ordered locus">ECOK1_0278</name>
</gene>
<accession>D5CVJ8</accession>
<accession>D7RNS4</accession>
<protein>
    <recommendedName>
        <fullName>Probable outer membrane usher protein EcpC</fullName>
    </recommendedName>
    <alternativeName>
        <fullName>Meningitis associated and temperature regulated protein D</fullName>
    </alternativeName>
</protein>